<keyword id="KW-0249">Electron transport</keyword>
<keyword id="KW-0349">Heme</keyword>
<keyword id="KW-0408">Iron</keyword>
<keyword id="KW-0472">Membrane</keyword>
<keyword id="KW-0479">Metal-binding</keyword>
<keyword id="KW-0602">Photosynthesis</keyword>
<keyword id="KW-1185">Reference proteome</keyword>
<keyword id="KW-0793">Thylakoid</keyword>
<keyword id="KW-0812">Transmembrane</keyword>
<keyword id="KW-1133">Transmembrane helix</keyword>
<keyword id="KW-0813">Transport</keyword>
<gene>
    <name evidence="1" type="primary">petB</name>
    <name type="ordered locus">P9211_03611</name>
</gene>
<comment type="function">
    <text evidence="1">Component of the cytochrome b6-f complex, which mediates electron transfer between photosystem II (PSII) and photosystem I (PSI), cyclic electron flow around PSI, and state transitions.</text>
</comment>
<comment type="cofactor">
    <cofactor evidence="1">
        <name>heme b</name>
        <dbReference type="ChEBI" id="CHEBI:60344"/>
    </cofactor>
    <text evidence="1">Binds 2 heme b groups non-covalently with two histidine residues as axial ligands.</text>
</comment>
<comment type="cofactor">
    <cofactor evidence="1">
        <name>heme c</name>
        <dbReference type="ChEBI" id="CHEBI:61717"/>
    </cofactor>
    <text evidence="1">Binds one heme group covalently by a single cysteine link with no axial amino acid ligand. This heme was named heme ci.</text>
</comment>
<comment type="subunit">
    <text evidence="1">The 4 large subunits of the cytochrome b6-f complex are cytochrome b6, subunit IV (17 kDa polypeptide, PetD), cytochrome f and the Rieske protein, while the 4 small subunits are PetG, PetL, PetM and PetN. The complex functions as a dimer.</text>
</comment>
<comment type="subcellular location">
    <subcellularLocation>
        <location evidence="1">Cellular thylakoid membrane</location>
        <topology evidence="1">Multi-pass membrane protein</topology>
    </subcellularLocation>
</comment>
<comment type="miscellaneous">
    <text evidence="1">Heme 1 (or BH or b566) is high-potential and absorbs at about 566 nm, and heme 2 (or BL or b562) is low-potential and absorbs at about 562 nm.</text>
</comment>
<comment type="similarity">
    <text evidence="1">Belongs to the cytochrome b family. PetB subfamily.</text>
</comment>
<feature type="chain" id="PRO_1000130667" description="Cytochrome b6">
    <location>
        <begin position="1"/>
        <end position="218"/>
    </location>
</feature>
<feature type="transmembrane region" description="Helical" evidence="1">
    <location>
        <begin position="35"/>
        <end position="55"/>
    </location>
</feature>
<feature type="transmembrane region" description="Helical" evidence="1">
    <location>
        <begin position="93"/>
        <end position="113"/>
    </location>
</feature>
<feature type="transmembrane region" description="Helical" evidence="1">
    <location>
        <begin position="119"/>
        <end position="139"/>
    </location>
</feature>
<feature type="transmembrane region" description="Helical" evidence="1">
    <location>
        <begin position="189"/>
        <end position="209"/>
    </location>
</feature>
<feature type="binding site" description="covalent" evidence="1">
    <location>
        <position position="38"/>
    </location>
    <ligand>
        <name>heme c</name>
        <dbReference type="ChEBI" id="CHEBI:61717"/>
    </ligand>
</feature>
<feature type="binding site" description="axial binding residue" evidence="1">
    <location>
        <position position="89"/>
    </location>
    <ligand>
        <name>heme b</name>
        <dbReference type="ChEBI" id="CHEBI:60344"/>
        <label>2</label>
    </ligand>
    <ligandPart>
        <name>Fe</name>
        <dbReference type="ChEBI" id="CHEBI:18248"/>
    </ligandPart>
</feature>
<feature type="binding site" description="axial binding residue" evidence="1">
    <location>
        <position position="103"/>
    </location>
    <ligand>
        <name>heme b</name>
        <dbReference type="ChEBI" id="CHEBI:60344"/>
        <label>1</label>
    </ligand>
    <ligandPart>
        <name>Fe</name>
        <dbReference type="ChEBI" id="CHEBI:18248"/>
    </ligandPart>
</feature>
<feature type="binding site" description="axial binding residue" evidence="1">
    <location>
        <position position="190"/>
    </location>
    <ligand>
        <name>heme b</name>
        <dbReference type="ChEBI" id="CHEBI:60344"/>
        <label>2</label>
    </ligand>
    <ligandPart>
        <name>Fe</name>
        <dbReference type="ChEBI" id="CHEBI:18248"/>
    </ligandPart>
</feature>
<feature type="binding site" description="axial binding residue" evidence="1">
    <location>
        <position position="205"/>
    </location>
    <ligand>
        <name>heme b</name>
        <dbReference type="ChEBI" id="CHEBI:60344"/>
        <label>1</label>
    </ligand>
    <ligandPart>
        <name>Fe</name>
        <dbReference type="ChEBI" id="CHEBI:18248"/>
    </ligandPart>
</feature>
<dbReference type="EMBL" id="CP000878">
    <property type="protein sequence ID" value="ABX08292.1"/>
    <property type="molecule type" value="Genomic_DNA"/>
</dbReference>
<dbReference type="RefSeq" id="WP_012194916.1">
    <property type="nucleotide sequence ID" value="NC_009976.1"/>
</dbReference>
<dbReference type="SMR" id="A9BDY2"/>
<dbReference type="STRING" id="93059.P9211_03611"/>
<dbReference type="KEGG" id="pmj:P9211_03611"/>
<dbReference type="eggNOG" id="COG1290">
    <property type="taxonomic scope" value="Bacteria"/>
</dbReference>
<dbReference type="HOGENOM" id="CLU_031114_0_2_3"/>
<dbReference type="OrthoDB" id="9804503at2"/>
<dbReference type="Proteomes" id="UP000000788">
    <property type="component" value="Chromosome"/>
</dbReference>
<dbReference type="GO" id="GO:0031676">
    <property type="term" value="C:plasma membrane-derived thylakoid membrane"/>
    <property type="evidence" value="ECO:0007669"/>
    <property type="project" value="UniProtKB-SubCell"/>
</dbReference>
<dbReference type="GO" id="GO:0045158">
    <property type="term" value="F:electron transporter, transferring electrons within cytochrome b6/f complex of photosystem II activity"/>
    <property type="evidence" value="ECO:0007669"/>
    <property type="project" value="UniProtKB-UniRule"/>
</dbReference>
<dbReference type="GO" id="GO:0046872">
    <property type="term" value="F:metal ion binding"/>
    <property type="evidence" value="ECO:0007669"/>
    <property type="project" value="UniProtKB-KW"/>
</dbReference>
<dbReference type="GO" id="GO:0016491">
    <property type="term" value="F:oxidoreductase activity"/>
    <property type="evidence" value="ECO:0007669"/>
    <property type="project" value="InterPro"/>
</dbReference>
<dbReference type="GO" id="GO:0015979">
    <property type="term" value="P:photosynthesis"/>
    <property type="evidence" value="ECO:0007669"/>
    <property type="project" value="UniProtKB-UniRule"/>
</dbReference>
<dbReference type="GO" id="GO:0022904">
    <property type="term" value="P:respiratory electron transport chain"/>
    <property type="evidence" value="ECO:0007669"/>
    <property type="project" value="InterPro"/>
</dbReference>
<dbReference type="CDD" id="cd00284">
    <property type="entry name" value="Cytochrome_b_N"/>
    <property type="match status" value="1"/>
</dbReference>
<dbReference type="FunFam" id="1.20.810.10:FF:000001">
    <property type="entry name" value="Cytochrome b6"/>
    <property type="match status" value="1"/>
</dbReference>
<dbReference type="Gene3D" id="1.20.810.10">
    <property type="entry name" value="Cytochrome Bc1 Complex, Chain C"/>
    <property type="match status" value="1"/>
</dbReference>
<dbReference type="HAMAP" id="MF_00633">
    <property type="entry name" value="Cytb6_f_cytb6"/>
    <property type="match status" value="1"/>
</dbReference>
<dbReference type="InterPro" id="IPR005797">
    <property type="entry name" value="Cyt_b/b6_N"/>
</dbReference>
<dbReference type="InterPro" id="IPR023530">
    <property type="entry name" value="Cyt_B6_PetB"/>
</dbReference>
<dbReference type="InterPro" id="IPR027387">
    <property type="entry name" value="Cytb/b6-like_sf"/>
</dbReference>
<dbReference type="InterPro" id="IPR048259">
    <property type="entry name" value="Cytochrome_b_N_euk/bac"/>
</dbReference>
<dbReference type="InterPro" id="IPR016174">
    <property type="entry name" value="Di-haem_cyt_TM"/>
</dbReference>
<dbReference type="NCBIfam" id="NF002990">
    <property type="entry name" value="PRK03735.1"/>
    <property type="match status" value="1"/>
</dbReference>
<dbReference type="PANTHER" id="PTHR19271">
    <property type="entry name" value="CYTOCHROME B"/>
    <property type="match status" value="1"/>
</dbReference>
<dbReference type="PANTHER" id="PTHR19271:SF16">
    <property type="entry name" value="CYTOCHROME B"/>
    <property type="match status" value="1"/>
</dbReference>
<dbReference type="Pfam" id="PF00033">
    <property type="entry name" value="Cytochrome_B"/>
    <property type="match status" value="1"/>
</dbReference>
<dbReference type="PIRSF" id="PIRSF000032">
    <property type="entry name" value="Cytochrome_b6"/>
    <property type="match status" value="1"/>
</dbReference>
<dbReference type="SUPFAM" id="SSF81342">
    <property type="entry name" value="Transmembrane di-heme cytochromes"/>
    <property type="match status" value="1"/>
</dbReference>
<dbReference type="PROSITE" id="PS51002">
    <property type="entry name" value="CYTB_NTER"/>
    <property type="match status" value="1"/>
</dbReference>
<sequence length="218" mass="24612">MANSSPVYDWFQERLEIQDIADDVTSKYVPPHVNIFYCLGGITLVCFLIQFATGFAMTFYYKPTVTEAYSSVSYLMTDVSFGWLIRSVHRWSASMMVLMLILHVFRVYLTGGFKRPRELTWVTGVVMAVITVAFGVTGYSLPWDQVGYWAVKIVSGVPAAIPVVGDFMVELLRGGESVGQTTLTRFYSLHTFVLPWTLAVFMLMHFLMIRKQGISGPL</sequence>
<evidence type="ECO:0000255" key="1">
    <source>
        <dbReference type="HAMAP-Rule" id="MF_00633"/>
    </source>
</evidence>
<reference key="1">
    <citation type="journal article" date="2007" name="PLoS Genet.">
        <title>Patterns and implications of gene gain and loss in the evolution of Prochlorococcus.</title>
        <authorList>
            <person name="Kettler G.C."/>
            <person name="Martiny A.C."/>
            <person name="Huang K."/>
            <person name="Zucker J."/>
            <person name="Coleman M.L."/>
            <person name="Rodrigue S."/>
            <person name="Chen F."/>
            <person name="Lapidus A."/>
            <person name="Ferriera S."/>
            <person name="Johnson J."/>
            <person name="Steglich C."/>
            <person name="Church G.M."/>
            <person name="Richardson P."/>
            <person name="Chisholm S.W."/>
        </authorList>
    </citation>
    <scope>NUCLEOTIDE SEQUENCE [LARGE SCALE GENOMIC DNA]</scope>
    <source>
        <strain>MIT 9211</strain>
    </source>
</reference>
<name>CYB6_PROM4</name>
<accession>A9BDY2</accession>
<organism>
    <name type="scientific">Prochlorococcus marinus (strain MIT 9211)</name>
    <dbReference type="NCBI Taxonomy" id="93059"/>
    <lineage>
        <taxon>Bacteria</taxon>
        <taxon>Bacillati</taxon>
        <taxon>Cyanobacteriota</taxon>
        <taxon>Cyanophyceae</taxon>
        <taxon>Synechococcales</taxon>
        <taxon>Prochlorococcaceae</taxon>
        <taxon>Prochlorococcus</taxon>
    </lineage>
</organism>
<protein>
    <recommendedName>
        <fullName evidence="1">Cytochrome b6</fullName>
    </recommendedName>
</protein>
<proteinExistence type="inferred from homology"/>